<proteinExistence type="inferred from homology"/>
<organism>
    <name type="scientific">Wolbachia pipientis wMel</name>
    <dbReference type="NCBI Taxonomy" id="163164"/>
    <lineage>
        <taxon>Bacteria</taxon>
        <taxon>Pseudomonadati</taxon>
        <taxon>Pseudomonadota</taxon>
        <taxon>Alphaproteobacteria</taxon>
        <taxon>Rickettsiales</taxon>
        <taxon>Anaplasmataceae</taxon>
        <taxon>Wolbachieae</taxon>
        <taxon>Wolbachia</taxon>
    </lineage>
</organism>
<accession>Q73HP2</accession>
<gene>
    <name evidence="1" type="primary">gatA</name>
    <name type="ordered locus">WD_0505</name>
</gene>
<sequence length="489" mass="52845">MNELRKLSITQMHDGLKKKSFSAVELVEAHISAVENEKLNAFITKTPEIAMKAAKAADEHFSRQKDDLISPLMGVPVGIKDLFCTKGIKTTACSKMLENFVPTYESTVSDLLLKSGAAMLGKLNMDEFAMGSANTNSYFGPVENVWIRKSDGEKVVPGGSSGGSAASVAGFLCAGALGSDTGGSVRQPAAYCGVVGIKPTYGRCSRFGMIAFASSLDQAGVITRSVSDSALMLEAICGYDTKDSISSEKPVPKFSSFINGDVKGKRIGIPKEYRMDGISEEIVHNWEKVASYLKENGAEVVDVTLPHTKYAIPVYYLICSAETSSNLARYDGVRYGFRVDADTLEEMYSLTRAEGFGKEVKRRILIGAYALSSGHYNEYYEKAQCIRALIRNDFIKAFEKIDYILVPSAPTEAFGLNEKPDPLIMCINDVFTVPASLAGLPAISVPVGLSNEGLPLALQVIGNYYDEAGILNVASVIEQNCGRIIRPLA</sequence>
<name>GATA_WOLPM</name>
<evidence type="ECO:0000255" key="1">
    <source>
        <dbReference type="HAMAP-Rule" id="MF_00120"/>
    </source>
</evidence>
<dbReference type="EC" id="6.3.5.7" evidence="1"/>
<dbReference type="EMBL" id="AE017196">
    <property type="protein sequence ID" value="AAS14221.1"/>
    <property type="molecule type" value="Genomic_DNA"/>
</dbReference>
<dbReference type="RefSeq" id="WP_010962643.1">
    <property type="nucleotide sequence ID" value="NZ_OX384529.1"/>
</dbReference>
<dbReference type="SMR" id="Q73HP2"/>
<dbReference type="EnsemblBacteria" id="AAS14221">
    <property type="protein sequence ID" value="AAS14221"/>
    <property type="gene ID" value="WD_0505"/>
</dbReference>
<dbReference type="GeneID" id="70035988"/>
<dbReference type="KEGG" id="wol:WD_0505"/>
<dbReference type="eggNOG" id="COG0154">
    <property type="taxonomic scope" value="Bacteria"/>
</dbReference>
<dbReference type="Proteomes" id="UP000008215">
    <property type="component" value="Chromosome"/>
</dbReference>
<dbReference type="GO" id="GO:0030956">
    <property type="term" value="C:glutamyl-tRNA(Gln) amidotransferase complex"/>
    <property type="evidence" value="ECO:0007669"/>
    <property type="project" value="InterPro"/>
</dbReference>
<dbReference type="GO" id="GO:0005524">
    <property type="term" value="F:ATP binding"/>
    <property type="evidence" value="ECO:0007669"/>
    <property type="project" value="UniProtKB-KW"/>
</dbReference>
<dbReference type="GO" id="GO:0050567">
    <property type="term" value="F:glutaminyl-tRNA synthase (glutamine-hydrolyzing) activity"/>
    <property type="evidence" value="ECO:0007669"/>
    <property type="project" value="UniProtKB-UniRule"/>
</dbReference>
<dbReference type="GO" id="GO:0006412">
    <property type="term" value="P:translation"/>
    <property type="evidence" value="ECO:0007669"/>
    <property type="project" value="UniProtKB-UniRule"/>
</dbReference>
<dbReference type="Gene3D" id="3.90.1300.10">
    <property type="entry name" value="Amidase signature (AS) domain"/>
    <property type="match status" value="1"/>
</dbReference>
<dbReference type="HAMAP" id="MF_00120">
    <property type="entry name" value="GatA"/>
    <property type="match status" value="1"/>
</dbReference>
<dbReference type="InterPro" id="IPR000120">
    <property type="entry name" value="Amidase"/>
</dbReference>
<dbReference type="InterPro" id="IPR020556">
    <property type="entry name" value="Amidase_CS"/>
</dbReference>
<dbReference type="InterPro" id="IPR023631">
    <property type="entry name" value="Amidase_dom"/>
</dbReference>
<dbReference type="InterPro" id="IPR036928">
    <property type="entry name" value="AS_sf"/>
</dbReference>
<dbReference type="InterPro" id="IPR004412">
    <property type="entry name" value="GatA"/>
</dbReference>
<dbReference type="NCBIfam" id="TIGR00132">
    <property type="entry name" value="gatA"/>
    <property type="match status" value="1"/>
</dbReference>
<dbReference type="PANTHER" id="PTHR11895:SF151">
    <property type="entry name" value="GLUTAMYL-TRNA(GLN) AMIDOTRANSFERASE SUBUNIT A"/>
    <property type="match status" value="1"/>
</dbReference>
<dbReference type="PANTHER" id="PTHR11895">
    <property type="entry name" value="TRANSAMIDASE"/>
    <property type="match status" value="1"/>
</dbReference>
<dbReference type="Pfam" id="PF01425">
    <property type="entry name" value="Amidase"/>
    <property type="match status" value="1"/>
</dbReference>
<dbReference type="SUPFAM" id="SSF75304">
    <property type="entry name" value="Amidase signature (AS) enzymes"/>
    <property type="match status" value="1"/>
</dbReference>
<dbReference type="PROSITE" id="PS00571">
    <property type="entry name" value="AMIDASES"/>
    <property type="match status" value="1"/>
</dbReference>
<reference key="1">
    <citation type="journal article" date="2004" name="PLoS Biol.">
        <title>Phylogenomics of the reproductive parasite Wolbachia pipientis wMel: a streamlined genome overrun by mobile genetic elements.</title>
        <authorList>
            <person name="Wu M."/>
            <person name="Sun L.V."/>
            <person name="Vamathevan J.J."/>
            <person name="Riegler M."/>
            <person name="DeBoy R.T."/>
            <person name="Brownlie J.C."/>
            <person name="McGraw E.A."/>
            <person name="Martin W."/>
            <person name="Esser C."/>
            <person name="Ahmadinejad N."/>
            <person name="Wiegand C."/>
            <person name="Madupu R."/>
            <person name="Beanan M.J."/>
            <person name="Brinkac L.M."/>
            <person name="Daugherty S.C."/>
            <person name="Durkin A.S."/>
            <person name="Kolonay J.F."/>
            <person name="Nelson W.C."/>
            <person name="Mohamoud Y."/>
            <person name="Lee P."/>
            <person name="Berry K.J."/>
            <person name="Young M.B."/>
            <person name="Utterback T.R."/>
            <person name="Weidman J.F."/>
            <person name="Nierman W.C."/>
            <person name="Paulsen I.T."/>
            <person name="Nelson K.E."/>
            <person name="Tettelin H."/>
            <person name="O'Neill S.L."/>
            <person name="Eisen J.A."/>
        </authorList>
    </citation>
    <scope>NUCLEOTIDE SEQUENCE [LARGE SCALE GENOMIC DNA]</scope>
</reference>
<keyword id="KW-0067">ATP-binding</keyword>
<keyword id="KW-0436">Ligase</keyword>
<keyword id="KW-0547">Nucleotide-binding</keyword>
<keyword id="KW-0648">Protein biosynthesis</keyword>
<comment type="function">
    <text evidence="1">Allows the formation of correctly charged Gln-tRNA(Gln) through the transamidation of misacylated Glu-tRNA(Gln) in organisms which lack glutaminyl-tRNA synthetase. The reaction takes place in the presence of glutamine and ATP through an activated gamma-phospho-Glu-tRNA(Gln).</text>
</comment>
<comment type="catalytic activity">
    <reaction evidence="1">
        <text>L-glutamyl-tRNA(Gln) + L-glutamine + ATP + H2O = L-glutaminyl-tRNA(Gln) + L-glutamate + ADP + phosphate + H(+)</text>
        <dbReference type="Rhea" id="RHEA:17521"/>
        <dbReference type="Rhea" id="RHEA-COMP:9681"/>
        <dbReference type="Rhea" id="RHEA-COMP:9684"/>
        <dbReference type="ChEBI" id="CHEBI:15377"/>
        <dbReference type="ChEBI" id="CHEBI:15378"/>
        <dbReference type="ChEBI" id="CHEBI:29985"/>
        <dbReference type="ChEBI" id="CHEBI:30616"/>
        <dbReference type="ChEBI" id="CHEBI:43474"/>
        <dbReference type="ChEBI" id="CHEBI:58359"/>
        <dbReference type="ChEBI" id="CHEBI:78520"/>
        <dbReference type="ChEBI" id="CHEBI:78521"/>
        <dbReference type="ChEBI" id="CHEBI:456216"/>
        <dbReference type="EC" id="6.3.5.7"/>
    </reaction>
</comment>
<comment type="subunit">
    <text evidence="1">Heterotrimer of A, B and C subunits.</text>
</comment>
<comment type="similarity">
    <text evidence="1">Belongs to the amidase family. GatA subfamily.</text>
</comment>
<protein>
    <recommendedName>
        <fullName evidence="1">Glutamyl-tRNA(Gln) amidotransferase subunit A</fullName>
        <shortName evidence="1">Glu-ADT subunit A</shortName>
        <ecNumber evidence="1">6.3.5.7</ecNumber>
    </recommendedName>
</protein>
<feature type="chain" id="PRO_0000241176" description="Glutamyl-tRNA(Gln) amidotransferase subunit A">
    <location>
        <begin position="1"/>
        <end position="489"/>
    </location>
</feature>
<feature type="active site" description="Charge relay system" evidence="1">
    <location>
        <position position="80"/>
    </location>
</feature>
<feature type="active site" description="Charge relay system" evidence="1">
    <location>
        <position position="160"/>
    </location>
</feature>
<feature type="active site" description="Acyl-ester intermediate" evidence="1">
    <location>
        <position position="184"/>
    </location>
</feature>